<accession>Q1C9U5</accession>
<keyword id="KW-0997">Cell inner membrane</keyword>
<keyword id="KW-1003">Cell membrane</keyword>
<keyword id="KW-0472">Membrane</keyword>
<keyword id="KW-0812">Transmembrane</keyword>
<keyword id="KW-1133">Transmembrane helix</keyword>
<dbReference type="EMBL" id="CP000308">
    <property type="protein sequence ID" value="ABG12777.1"/>
    <property type="molecule type" value="Genomic_DNA"/>
</dbReference>
<dbReference type="RefSeq" id="WP_002211971.1">
    <property type="nucleotide sequence ID" value="NZ_CP009906.1"/>
</dbReference>
<dbReference type="SMR" id="Q1C9U5"/>
<dbReference type="KEGG" id="ypa:YPA_0809"/>
<dbReference type="Proteomes" id="UP000001971">
    <property type="component" value="Chromosome"/>
</dbReference>
<dbReference type="GO" id="GO:0005886">
    <property type="term" value="C:plasma membrane"/>
    <property type="evidence" value="ECO:0007669"/>
    <property type="project" value="UniProtKB-SubCell"/>
</dbReference>
<dbReference type="HAMAP" id="MF_01144">
    <property type="entry name" value="UPF0299"/>
    <property type="match status" value="1"/>
</dbReference>
<dbReference type="InterPro" id="IPR005538">
    <property type="entry name" value="LrgA/CidA"/>
</dbReference>
<dbReference type="InterPro" id="IPR022957">
    <property type="entry name" value="Uncharacterised_UPF0299"/>
</dbReference>
<dbReference type="NCBIfam" id="NF002494">
    <property type="entry name" value="PRK01821.1"/>
    <property type="match status" value="1"/>
</dbReference>
<dbReference type="PANTHER" id="PTHR33931">
    <property type="entry name" value="HOLIN-LIKE PROTEIN CIDA-RELATED"/>
    <property type="match status" value="1"/>
</dbReference>
<dbReference type="PANTHER" id="PTHR33931:SF5">
    <property type="entry name" value="UPF0299 MEMBRANE PROTEIN YOHJ"/>
    <property type="match status" value="1"/>
</dbReference>
<dbReference type="Pfam" id="PF03788">
    <property type="entry name" value="LrgA"/>
    <property type="match status" value="1"/>
</dbReference>
<proteinExistence type="inferred from homology"/>
<sequence>MRNMMSLCWQYLRAFTIIYLCLWAGKALALLLPIVIPGSIIGMLILFVLLTLQILPSPWVKPSCQLLIRYMALLFVPIGVGVMQYYEQLTKQFGPIVVSCFISTLIVMLVVAYSSHYVHRDRKVISPSTPTEGEK</sequence>
<reference key="1">
    <citation type="journal article" date="2006" name="J. Bacteriol.">
        <title>Complete genome sequence of Yersinia pestis strains Antiqua and Nepal516: evidence of gene reduction in an emerging pathogen.</title>
        <authorList>
            <person name="Chain P.S.G."/>
            <person name="Hu P."/>
            <person name="Malfatti S.A."/>
            <person name="Radnedge L."/>
            <person name="Larimer F."/>
            <person name="Vergez L.M."/>
            <person name="Worsham P."/>
            <person name="Chu M.C."/>
            <person name="Andersen G.L."/>
        </authorList>
    </citation>
    <scope>NUCLEOTIDE SEQUENCE [LARGE SCALE GENOMIC DNA]</scope>
    <source>
        <strain>Antiqua</strain>
    </source>
</reference>
<evidence type="ECO:0000255" key="1">
    <source>
        <dbReference type="HAMAP-Rule" id="MF_01144"/>
    </source>
</evidence>
<gene>
    <name type="ordered locus">YPA_0809</name>
</gene>
<comment type="subcellular location">
    <subcellularLocation>
        <location evidence="1">Cell inner membrane</location>
        <topology evidence="1">Multi-pass membrane protein</topology>
    </subcellularLocation>
</comment>
<comment type="similarity">
    <text evidence="1">Belongs to the UPF0299 family.</text>
</comment>
<organism>
    <name type="scientific">Yersinia pestis bv. Antiqua (strain Antiqua)</name>
    <dbReference type="NCBI Taxonomy" id="360102"/>
    <lineage>
        <taxon>Bacteria</taxon>
        <taxon>Pseudomonadati</taxon>
        <taxon>Pseudomonadota</taxon>
        <taxon>Gammaproteobacteria</taxon>
        <taxon>Enterobacterales</taxon>
        <taxon>Yersiniaceae</taxon>
        <taxon>Yersinia</taxon>
    </lineage>
</organism>
<name>Y809_YERPA</name>
<protein>
    <recommendedName>
        <fullName evidence="1">UPF0299 membrane protein YPA_0809</fullName>
    </recommendedName>
</protein>
<feature type="chain" id="PRO_1000085044" description="UPF0299 membrane protein YPA_0809">
    <location>
        <begin position="1"/>
        <end position="135"/>
    </location>
</feature>
<feature type="transmembrane region" description="Helical" evidence="1">
    <location>
        <begin position="30"/>
        <end position="50"/>
    </location>
</feature>
<feature type="transmembrane region" description="Helical" evidence="1">
    <location>
        <begin position="66"/>
        <end position="86"/>
    </location>
</feature>
<feature type="transmembrane region" description="Helical" evidence="1">
    <location>
        <begin position="93"/>
        <end position="113"/>
    </location>
</feature>